<gene>
    <name evidence="1 27 28" type="primary">ruvB</name>
    <name type="ordered locus">b1860</name>
    <name type="ordered locus">JW1849</name>
</gene>
<reference evidence="32" key="1">
    <citation type="journal article" date="1988" name="Nucleic Acids Res.">
        <title>Nucleotide sequencing of the ruv region of Escherichia coli K-12 reveals a LexA regulated operon encoding two genes.</title>
        <authorList>
            <person name="Benson F.E."/>
            <person name="Illing G.T."/>
            <person name="Sharples G.J."/>
            <person name="Lloyd R.G."/>
        </authorList>
    </citation>
    <scope>NUCLEOTIDE SEQUENCE [GENOMIC DNA]</scope>
    <scope>INDUCTION</scope>
    <scope>OPERON STRUCTURE</scope>
    <source>
        <strain>K12</strain>
    </source>
</reference>
<reference evidence="29" key="2">
    <citation type="journal article" date="1988" name="J. Bacteriol.">
        <title>Structure and regulation of the Escherichia coli ruv operon involved in DNA repair and recombination.</title>
        <authorList>
            <person name="Shinagawa H."/>
            <person name="Makino K."/>
            <person name="Amemura M."/>
            <person name="Kimura S."/>
            <person name="Iwasaki H."/>
            <person name="Nakata A."/>
        </authorList>
    </citation>
    <scope>NUCLEOTIDE SEQUENCE [GENOMIC DNA]</scope>
    <scope>INDUCTION</scope>
    <scope>OPERON STRUCTURE</scope>
</reference>
<reference evidence="30" key="3">
    <citation type="journal article" date="1996" name="DNA Res.">
        <title>A 460-kb DNA sequence of the Escherichia coli K-12 genome corresponding to the 40.1-50.0 min region on the linkage map.</title>
        <authorList>
            <person name="Itoh T."/>
            <person name="Aiba H."/>
            <person name="Baba T."/>
            <person name="Fujita K."/>
            <person name="Hayashi K."/>
            <person name="Inada T."/>
            <person name="Isono K."/>
            <person name="Kasai H."/>
            <person name="Kimura S."/>
            <person name="Kitakawa M."/>
            <person name="Kitagawa M."/>
            <person name="Makino K."/>
            <person name="Miki T."/>
            <person name="Mizobuchi K."/>
            <person name="Mori H."/>
            <person name="Mori T."/>
            <person name="Motomura K."/>
            <person name="Nakade S."/>
            <person name="Nakamura Y."/>
            <person name="Nashimoto H."/>
            <person name="Nishio Y."/>
            <person name="Oshima T."/>
            <person name="Saito N."/>
            <person name="Sampei G."/>
            <person name="Seki Y."/>
            <person name="Sivasundaram S."/>
            <person name="Tagami H."/>
            <person name="Takeda J."/>
            <person name="Takemoto K."/>
            <person name="Wada C."/>
            <person name="Yamamoto Y."/>
            <person name="Horiuchi T."/>
        </authorList>
    </citation>
    <scope>NUCLEOTIDE SEQUENCE [LARGE SCALE GENOMIC DNA]</scope>
    <source>
        <strain>K12 / W3110 / ATCC 27325 / DSM 5911</strain>
    </source>
</reference>
<reference evidence="30" key="4">
    <citation type="journal article" date="1997" name="Science">
        <title>The complete genome sequence of Escherichia coli K-12.</title>
        <authorList>
            <person name="Blattner F.R."/>
            <person name="Plunkett G. III"/>
            <person name="Bloch C.A."/>
            <person name="Perna N.T."/>
            <person name="Burland V."/>
            <person name="Riley M."/>
            <person name="Collado-Vides J."/>
            <person name="Glasner J.D."/>
            <person name="Rode C.K."/>
            <person name="Mayhew G.F."/>
            <person name="Gregor J."/>
            <person name="Davis N.W."/>
            <person name="Kirkpatrick H.A."/>
            <person name="Goeden M.A."/>
            <person name="Rose D.J."/>
            <person name="Mau B."/>
            <person name="Shao Y."/>
        </authorList>
    </citation>
    <scope>NUCLEOTIDE SEQUENCE [LARGE SCALE GENOMIC DNA]</scope>
    <source>
        <strain>K12 / MG1655 / ATCC 47076</strain>
    </source>
</reference>
<reference evidence="31" key="5">
    <citation type="journal article" date="2006" name="Mol. Syst. Biol.">
        <title>Highly accurate genome sequences of Escherichia coli K-12 strains MG1655 and W3110.</title>
        <authorList>
            <person name="Hayashi K."/>
            <person name="Morooka N."/>
            <person name="Yamamoto Y."/>
            <person name="Fujita K."/>
            <person name="Isono K."/>
            <person name="Choi S."/>
            <person name="Ohtsubo E."/>
            <person name="Baba T."/>
            <person name="Wanner B.L."/>
            <person name="Mori H."/>
            <person name="Horiuchi T."/>
        </authorList>
    </citation>
    <scope>NUCLEOTIDE SEQUENCE [LARGE SCALE GENOMIC DNA]</scope>
    <source>
        <strain>K12 / W3110 / ATCC 27325 / DSM 5911</strain>
    </source>
</reference>
<reference key="6">
    <citation type="journal article" date="1989" name="J. Bacteriol.">
        <title>Overproduction, purification, and ATPase activity of the Escherichia coli RuvB protein involved in DNA repair.</title>
        <authorList>
            <person name="Iwasaki H."/>
            <person name="Shiba T."/>
            <person name="Makino K."/>
            <person name="Nakata A."/>
            <person name="Shinagawa H."/>
        </authorList>
    </citation>
    <scope>PROTEIN SEQUENCE OF 1-20</scope>
    <scope>FUNCTION AS A WEAK ATPASE</scope>
    <scope>ACTIVITY REGULATION</scope>
    <scope>SUBUNIT</scope>
    <scope>NUCLEOTIDE-BINDING</scope>
</reference>
<reference key="7">
    <citation type="journal article" date="1984" name="Mol. Gen. Genet.">
        <title>Effect of ruv mutations on recombination and DNA repair in Escherichia coli K12.</title>
        <authorList>
            <person name="Lloyd R.G."/>
            <person name="Benson F.E."/>
            <person name="Shurvinton C.E."/>
        </authorList>
    </citation>
    <scope>FUNCTION</scope>
    <scope>DISRUPTION PHENOTYPE</scope>
    <source>
        <strain>K12</strain>
    </source>
</reference>
<reference key="8">
    <citation type="journal article" date="1989" name="Mol. Gen. Genet.">
        <title>Involvement in DNA repair of the ruvA gene of Escherichia coli.</title>
        <authorList>
            <person name="Iwasaki H."/>
            <person name="Shiba T."/>
            <person name="Nakata A."/>
            <person name="Shinagawa H."/>
        </authorList>
    </citation>
    <scope>DISRUPTION PHENOTYPE</scope>
</reference>
<reference key="9">
    <citation type="journal article" date="1990" name="Mol. Gen. Genet.">
        <title>Molecular and functional analysis of the ruv region of Escherichia coli K-12 reveals three genes involved in DNA repair and recombination.</title>
        <authorList>
            <person name="Sharples G.J."/>
            <person name="Benson F.E."/>
            <person name="Illing G.T."/>
            <person name="Lloyd R.G."/>
        </authorList>
    </citation>
    <scope>DISRUPTION PHENOTYPE</scope>
    <source>
        <strain>K12 / AB1157</strain>
    </source>
</reference>
<reference key="10">
    <citation type="journal article" date="1991" name="Proc. Natl. Acad. Sci. U.S.A.">
        <title>SOS-inducible DNA repair proteins, RuvA and RuvB, of Escherichia coli: functional interactions between RuvA and RuvB for ATP hydrolysis and renaturation of the cruciform structure in supercoiled DNA.</title>
        <authorList>
            <person name="Shiba T."/>
            <person name="Iwasaki H."/>
            <person name="Nakata A."/>
            <person name="Shinagawa H."/>
        </authorList>
    </citation>
    <scope>FUNCTION</scope>
</reference>
<reference key="11">
    <citation type="journal article" date="1992" name="Mol. Gen. Genet.">
        <title>Purification and properties of the RuvA and RuvB proteins of Escherichia coli.</title>
        <authorList>
            <person name="Tsaneva I.R."/>
            <person name="Illing G."/>
            <person name="Lloyd R.G."/>
            <person name="West S.C."/>
        </authorList>
    </citation>
    <scope>FUNCTION</scope>
    <scope>SUBUNIT</scope>
</reference>
<reference key="12">
    <citation type="journal article" date="1992" name="Proc. Natl. Acad. Sci. U.S.A.">
        <title>Interaction of Escherichia coli RuvA and RuvB proteins with synthetic Holliday junctions.</title>
        <authorList>
            <person name="Parsons C.A."/>
            <person name="Tsaneva I."/>
            <person name="Lloyd R.G."/>
            <person name="West S.C."/>
        </authorList>
    </citation>
    <scope>PROBABLE FUNCTION IN HOLLIDAY JUNCTION</scope>
    <scope>COFACTOR</scope>
</reference>
<reference key="13">
    <citation type="journal article" date="1992" name="Cell">
        <title>ATP-dependent branch migration of Holliday junctions promoted by the RuvA and RuvB proteins of E. coli.</title>
        <authorList>
            <person name="Tsaneva I.R."/>
            <person name="Mueller B."/>
            <person name="West S.C."/>
        </authorList>
    </citation>
    <scope>FUNCTION</scope>
    <scope>COFACTOR</scope>
</reference>
<reference key="14">
    <citation type="journal article" date="1993" name="J. Mol. Biol.">
        <title>Formation of a RuvAB-Holliday junction complex in vitro.</title>
        <authorList>
            <person name="Parsons C.A."/>
            <person name="West S.C."/>
        </authorList>
    </citation>
    <scope>FUNCTION</scope>
    <scope>COFACTOR</scope>
    <scope>SUBUNIT</scope>
</reference>
<reference key="15">
    <citation type="journal article" date="1993" name="Proc. Natl. Acad. Sci. U.S.A.">
        <title>RuvA and RuvB proteins of Escherichia coli exhibit DNA helicase activity in vitro.</title>
        <authorList>
            <person name="Tsaneva I.R."/>
            <person name="Mueller B."/>
            <person name="West S.C."/>
        </authorList>
    </citation>
    <scope>INCORRECT FUNCTION AS A HELICASE DIRECTIONALITY</scope>
    <scope>CATALYTIC ACTIVITY</scope>
</reference>
<reference key="16">
    <citation type="journal article" date="1994" name="Proc. Natl. Acad. Sci. U.S.A.">
        <title>The Escherichia coli RuvB branch migration protein forms double hexameric rings around DNA.</title>
        <authorList>
            <person name="Stasiak A."/>
            <person name="Tsaneva I.R."/>
            <person name="West S.C."/>
            <person name="Benson C.J."/>
            <person name="Yu X."/>
            <person name="Egelman E.H."/>
        </authorList>
    </citation>
    <scope>SUBUNIT</scope>
    <scope>DNA-BINDING</scope>
</reference>
<reference key="17">
    <citation type="journal article" date="1995" name="Nature">
        <title>Structure of a multisubunit complex that promotes DNA branch migration.</title>
        <authorList>
            <person name="Parsons C.A."/>
            <person name="Stasiak A."/>
            <person name="Bennett R.J."/>
            <person name="West S.C."/>
        </authorList>
    </citation>
    <scope>STRUCTURE BY ELECTRON MICROSCOPY</scope>
    <scope>SUBUNIT</scope>
</reference>
<reference key="18">
    <citation type="journal article" date="1996" name="Genes Cells">
        <title>The directionality of RuvAB-mediated branch migration: in vitro studies with three-armed junctions.</title>
        <authorList>
            <person name="Hiom K."/>
            <person name="Tsaneva I.R."/>
            <person name="West S.C."/>
        </authorList>
    </citation>
    <scope>FUNCTION</scope>
    <scope>SUBUNIT</scope>
</reference>
<reference key="19">
    <citation type="journal article" date="1997" name="Cell">
        <title>In vitro reconstitution of the late steps of genetic recombination in E. coli.</title>
        <authorList>
            <person name="Eggleston A.K."/>
            <person name="Mitchell A.H."/>
            <person name="West S.C."/>
        </authorList>
    </citation>
    <scope>FUNCTION</scope>
    <scope>IN VITRO RECONSTITUTION</scope>
    <scope>SUBUNIT</scope>
</reference>
<reference key="20">
    <citation type="journal article" date="1997" name="J. Mol. Biol.">
        <title>Structure and subunit composition of the RuvAB-Holliday junction complex.</title>
        <authorList>
            <person name="Yu X."/>
            <person name="West S.C."/>
            <person name="Egelman E.H."/>
        </authorList>
    </citation>
    <scope>STRUCTURE BY ELECTRON MICROSCOPY</scope>
    <scope>SUBUNIT</scope>
</reference>
<reference key="21">
    <citation type="journal article" date="1998" name="Curr. Biol.">
        <title>Formation of RuvABC-Holliday junction complexes in vitro.</title>
        <authorList>
            <person name="Davies A.A."/>
            <person name="West S.C."/>
        </authorList>
    </citation>
    <scope>HOLLIDAY JUNCTION-RUVABC COMPLEX FORMATION</scope>
</reference>
<reference key="22">
    <citation type="journal article" date="1998" name="Cell">
        <title>RuvAB acts at arrested replication forks.</title>
        <authorList>
            <person name="Seigneur M."/>
            <person name="Bidnenko V."/>
            <person name="Ehrlich S.D."/>
            <person name="Michel B."/>
        </authorList>
    </citation>
    <scope>ROLE IN REPLICATION FORK REVERSAL</scope>
    <scope>DISRUPTION PHENOTYPE</scope>
</reference>
<reference key="23">
    <citation type="journal article" date="1999" name="Genes Dev.">
        <title>Assembly of the Escherichia coli RuvABC resolvasome directs the orientation of holliday junction resolution.</title>
        <authorList>
            <person name="van Gool A.J."/>
            <person name="Hajibagheri N.M."/>
            <person name="Stasiak A."/>
            <person name="West S.C."/>
        </authorList>
    </citation>
    <scope>FUNCTION</scope>
    <scope>IN VITRO RECONSTITUTION</scope>
    <scope>SUBUNIT</scope>
</reference>
<reference key="24">
    <citation type="journal article" date="2000" name="Curr. Biol.">
        <title>RuvAB-mediated branch migration does not involve extensive DNA opening within the RuvB hexamer.</title>
        <authorList>
            <person name="George H."/>
            <person name="Kuraoka I."/>
            <person name="Nauman D.A."/>
            <person name="Kobertz W.R."/>
            <person name="Wood R.D."/>
            <person name="West S.C."/>
        </authorList>
    </citation>
    <scope>FUNCTION ON CROSS-LINKED DNA</scope>
</reference>
<reference key="25">
    <citation type="journal article" date="2006" name="EMBO J.">
        <title>RuvAB is essential for replication forks reversal in certain replication mutants.</title>
        <authorList>
            <person name="Baharoglu Z."/>
            <person name="Petranovic M."/>
            <person name="Flores M.J."/>
            <person name="Michel B."/>
        </authorList>
    </citation>
    <scope>ROLE IN REPLICATION FORK REVERSAL</scope>
</reference>
<reference key="26">
    <citation type="journal article" date="2008" name="Mol. Microbiol.">
        <title>ruvA and ruvB mutants specifically impaired for replication fork reversal.</title>
        <authorList>
            <person name="Le Masson M."/>
            <person name="Baharoglu Z."/>
            <person name="Michel B."/>
        </authorList>
    </citation>
    <scope>ROLE IN REPLICATION FORK REVERSAL</scope>
    <scope>ROLE IN MITOMYCIN C RESISTANCE</scope>
    <scope>MUTAGENESIS OF ALA-22; TYR-184; PRO-220 AND ALA-250</scope>
</reference>
<reference key="27">
    <citation type="journal article" date="2009" name="Mol. Cell">
        <title>Hydroxyurea induces hydroxyl radical-mediated cell death in Escherichia coli.</title>
        <authorList>
            <person name="Davies B.W."/>
            <person name="Kohanski M.A."/>
            <person name="Simmons L.A."/>
            <person name="Winkler J.A."/>
            <person name="Collins J.J."/>
            <person name="Walker G.C."/>
        </authorList>
    </citation>
    <scope>INDUCTION BY HYDROXYUREA</scope>
    <source>
        <strain>K12 / MC4100 / ATCC 35695 / DSM 6574</strain>
    </source>
</reference>
<reference key="28">
    <citation type="journal article" date="2011" name="Mol. Microbiol.">
        <title>A dual function of the CRISPR-Cas system in bacterial antivirus immunity and DNA repair.</title>
        <authorList>
            <person name="Babu M."/>
            <person name="Beloglazova N."/>
            <person name="Flick R."/>
            <person name="Graham C."/>
            <person name="Skarina T."/>
            <person name="Nocek B."/>
            <person name="Gagarinova A."/>
            <person name="Pogoutse O."/>
            <person name="Brown G."/>
            <person name="Binkowski A."/>
            <person name="Phanse S."/>
            <person name="Joachimiak A."/>
            <person name="Koonin E.V."/>
            <person name="Savchenko A."/>
            <person name="Emili A."/>
            <person name="Greenblatt J."/>
            <person name="Edwards A.M."/>
            <person name="Yakunin A.F."/>
        </authorList>
    </citation>
    <scope>INTERACTION WITH CAS1 (YGBT)</scope>
    <scope>SUBCELLULAR LOCATION</scope>
    <source>
        <strain>K12</strain>
    </source>
</reference>
<keyword id="KW-0067">ATP-binding</keyword>
<keyword id="KW-0963">Cytoplasm</keyword>
<keyword id="KW-0903">Direct protein sequencing</keyword>
<keyword id="KW-0227">DNA damage</keyword>
<keyword id="KW-0233">DNA recombination</keyword>
<keyword id="KW-0234">DNA repair</keyword>
<keyword id="KW-0238">DNA-binding</keyword>
<keyword id="KW-0378">Hydrolase</keyword>
<keyword id="KW-0547">Nucleotide-binding</keyword>
<keyword id="KW-1185">Reference proteome</keyword>
<keyword id="KW-0742">SOS response</keyword>
<protein>
    <recommendedName>
        <fullName evidence="1">Holliday junction branch migration complex subunit RuvB</fullName>
        <ecNumber evidence="1 21">3.6.4.-</ecNumber>
    </recommendedName>
</protein>
<dbReference type="EC" id="3.6.4.-" evidence="1 21"/>
<dbReference type="EMBL" id="X07091">
    <property type="protein sequence ID" value="CAA30120.1"/>
    <property type="molecule type" value="Genomic_DNA"/>
</dbReference>
<dbReference type="EMBL" id="M21298">
    <property type="protein sequence ID" value="AAA24613.1"/>
    <property type="molecule type" value="Genomic_DNA"/>
</dbReference>
<dbReference type="EMBL" id="U00096">
    <property type="protein sequence ID" value="AAC74930.1"/>
    <property type="molecule type" value="Genomic_DNA"/>
</dbReference>
<dbReference type="EMBL" id="AP009048">
    <property type="protein sequence ID" value="BAA15671.1"/>
    <property type="molecule type" value="Genomic_DNA"/>
</dbReference>
<dbReference type="PIR" id="B28533">
    <property type="entry name" value="BVECVB"/>
</dbReference>
<dbReference type="RefSeq" id="NP_416374.1">
    <property type="nucleotide sequence ID" value="NC_000913.3"/>
</dbReference>
<dbReference type="RefSeq" id="WP_000568519.1">
    <property type="nucleotide sequence ID" value="NZ_STEB01000009.1"/>
</dbReference>
<dbReference type="SMR" id="P0A812"/>
<dbReference type="BioGRID" id="4260882">
    <property type="interactions" value="93"/>
</dbReference>
<dbReference type="ComplexPortal" id="CPX-5124">
    <property type="entry name" value="RuvAB Holliday junction DNA helicase complex"/>
</dbReference>
<dbReference type="DIP" id="DIP-47870N"/>
<dbReference type="FunCoup" id="P0A812">
    <property type="interactions" value="348"/>
</dbReference>
<dbReference type="IntAct" id="P0A812">
    <property type="interactions" value="18"/>
</dbReference>
<dbReference type="STRING" id="511145.b1860"/>
<dbReference type="jPOST" id="P0A812"/>
<dbReference type="PaxDb" id="511145-b1860"/>
<dbReference type="EnsemblBacteria" id="AAC74930">
    <property type="protein sequence ID" value="AAC74930"/>
    <property type="gene ID" value="b1860"/>
</dbReference>
<dbReference type="GeneID" id="75202735"/>
<dbReference type="GeneID" id="946371"/>
<dbReference type="KEGG" id="ecj:JW1849"/>
<dbReference type="KEGG" id="eco:b1860"/>
<dbReference type="KEGG" id="ecoc:C3026_10595"/>
<dbReference type="PATRIC" id="fig|1411691.4.peg.388"/>
<dbReference type="EchoBASE" id="EB0917"/>
<dbReference type="eggNOG" id="COG2255">
    <property type="taxonomic scope" value="Bacteria"/>
</dbReference>
<dbReference type="HOGENOM" id="CLU_055599_1_0_6"/>
<dbReference type="InParanoid" id="P0A812"/>
<dbReference type="OMA" id="IHRMSRP"/>
<dbReference type="OrthoDB" id="9804478at2"/>
<dbReference type="PhylomeDB" id="P0A812"/>
<dbReference type="BioCyc" id="EcoCyc:EG10924-MONOMER"/>
<dbReference type="BioCyc" id="MetaCyc:EG10924-MONOMER"/>
<dbReference type="PRO" id="PR:P0A812"/>
<dbReference type="Proteomes" id="UP000000625">
    <property type="component" value="Chromosome"/>
</dbReference>
<dbReference type="GO" id="GO:0005829">
    <property type="term" value="C:cytosol"/>
    <property type="evidence" value="ECO:0000314"/>
    <property type="project" value="EcoCyc"/>
</dbReference>
<dbReference type="GO" id="GO:0009379">
    <property type="term" value="C:Holliday junction helicase complex"/>
    <property type="evidence" value="ECO:0000353"/>
    <property type="project" value="ComplexPortal"/>
</dbReference>
<dbReference type="GO" id="GO:0048476">
    <property type="term" value="C:Holliday junction resolvase complex"/>
    <property type="evidence" value="ECO:0000314"/>
    <property type="project" value="EcoCyc"/>
</dbReference>
<dbReference type="GO" id="GO:0005524">
    <property type="term" value="F:ATP binding"/>
    <property type="evidence" value="ECO:0007669"/>
    <property type="project" value="UniProtKB-UniRule"/>
</dbReference>
<dbReference type="GO" id="GO:0016887">
    <property type="term" value="F:ATP hydrolysis activity"/>
    <property type="evidence" value="ECO:0007669"/>
    <property type="project" value="InterPro"/>
</dbReference>
<dbReference type="GO" id="GO:0003678">
    <property type="term" value="F:DNA helicase activity"/>
    <property type="evidence" value="ECO:0000314"/>
    <property type="project" value="CACAO"/>
</dbReference>
<dbReference type="GO" id="GO:0000400">
    <property type="term" value="F:four-way junction DNA binding"/>
    <property type="evidence" value="ECO:0007669"/>
    <property type="project" value="UniProtKB-UniRule"/>
</dbReference>
<dbReference type="GO" id="GO:0009378">
    <property type="term" value="F:four-way junction helicase activity"/>
    <property type="evidence" value="ECO:0000314"/>
    <property type="project" value="EcoCyc"/>
</dbReference>
<dbReference type="GO" id="GO:0000725">
    <property type="term" value="P:recombinational repair"/>
    <property type="evidence" value="ECO:0000314"/>
    <property type="project" value="ComplexPortal"/>
</dbReference>
<dbReference type="GO" id="GO:0009411">
    <property type="term" value="P:response to UV"/>
    <property type="evidence" value="ECO:0000315"/>
    <property type="project" value="EcoCyc"/>
</dbReference>
<dbReference type="GO" id="GO:0009432">
    <property type="term" value="P:SOS response"/>
    <property type="evidence" value="ECO:0000270"/>
    <property type="project" value="EcoCyc"/>
</dbReference>
<dbReference type="CDD" id="cd00009">
    <property type="entry name" value="AAA"/>
    <property type="match status" value="1"/>
</dbReference>
<dbReference type="FunFam" id="1.10.10.10:FF:000086">
    <property type="entry name" value="Holliday junction ATP-dependent DNA helicase RuvB"/>
    <property type="match status" value="1"/>
</dbReference>
<dbReference type="FunFam" id="1.10.8.60:FF:000023">
    <property type="entry name" value="Holliday junction ATP-dependent DNA helicase RuvB"/>
    <property type="match status" value="1"/>
</dbReference>
<dbReference type="FunFam" id="3.40.50.300:FF:000073">
    <property type="entry name" value="Holliday junction ATP-dependent DNA helicase RuvB"/>
    <property type="match status" value="1"/>
</dbReference>
<dbReference type="Gene3D" id="1.10.8.60">
    <property type="match status" value="1"/>
</dbReference>
<dbReference type="Gene3D" id="3.40.50.300">
    <property type="entry name" value="P-loop containing nucleotide triphosphate hydrolases"/>
    <property type="match status" value="1"/>
</dbReference>
<dbReference type="Gene3D" id="1.10.10.10">
    <property type="entry name" value="Winged helix-like DNA-binding domain superfamily/Winged helix DNA-binding domain"/>
    <property type="match status" value="1"/>
</dbReference>
<dbReference type="HAMAP" id="MF_00016">
    <property type="entry name" value="DNA_HJ_migration_RuvB"/>
    <property type="match status" value="1"/>
</dbReference>
<dbReference type="InterPro" id="IPR003593">
    <property type="entry name" value="AAA+_ATPase"/>
</dbReference>
<dbReference type="InterPro" id="IPR041445">
    <property type="entry name" value="AAA_lid_4"/>
</dbReference>
<dbReference type="InterPro" id="IPR004605">
    <property type="entry name" value="DNA_helicase_Holl-junc_RuvB"/>
</dbReference>
<dbReference type="InterPro" id="IPR027417">
    <property type="entry name" value="P-loop_NTPase"/>
</dbReference>
<dbReference type="InterPro" id="IPR008824">
    <property type="entry name" value="RuvB-like_N"/>
</dbReference>
<dbReference type="InterPro" id="IPR008823">
    <property type="entry name" value="RuvB_C"/>
</dbReference>
<dbReference type="InterPro" id="IPR036388">
    <property type="entry name" value="WH-like_DNA-bd_sf"/>
</dbReference>
<dbReference type="InterPro" id="IPR036390">
    <property type="entry name" value="WH_DNA-bd_sf"/>
</dbReference>
<dbReference type="NCBIfam" id="NF000868">
    <property type="entry name" value="PRK00080.1"/>
    <property type="match status" value="1"/>
</dbReference>
<dbReference type="NCBIfam" id="TIGR00635">
    <property type="entry name" value="ruvB"/>
    <property type="match status" value="1"/>
</dbReference>
<dbReference type="PANTHER" id="PTHR42848">
    <property type="match status" value="1"/>
</dbReference>
<dbReference type="PANTHER" id="PTHR42848:SF1">
    <property type="entry name" value="HOLLIDAY JUNCTION BRANCH MIGRATION COMPLEX SUBUNIT RUVB"/>
    <property type="match status" value="1"/>
</dbReference>
<dbReference type="Pfam" id="PF17864">
    <property type="entry name" value="AAA_lid_4"/>
    <property type="match status" value="1"/>
</dbReference>
<dbReference type="Pfam" id="PF05491">
    <property type="entry name" value="RuvB_C"/>
    <property type="match status" value="1"/>
</dbReference>
<dbReference type="Pfam" id="PF05496">
    <property type="entry name" value="RuvB_N"/>
    <property type="match status" value="1"/>
</dbReference>
<dbReference type="SMART" id="SM00382">
    <property type="entry name" value="AAA"/>
    <property type="match status" value="1"/>
</dbReference>
<dbReference type="SUPFAM" id="SSF52540">
    <property type="entry name" value="P-loop containing nucleoside triphosphate hydrolases"/>
    <property type="match status" value="1"/>
</dbReference>
<dbReference type="SUPFAM" id="SSF46785">
    <property type="entry name" value="Winged helix' DNA-binding domain"/>
    <property type="match status" value="1"/>
</dbReference>
<name>RUVB_ECOLI</name>
<evidence type="ECO:0000255" key="1">
    <source>
        <dbReference type="HAMAP-Rule" id="MF_00016"/>
    </source>
</evidence>
<evidence type="ECO:0000269" key="2">
    <source>
    </source>
</evidence>
<evidence type="ECO:0000269" key="3">
    <source>
    </source>
</evidence>
<evidence type="ECO:0000269" key="4">
    <source>
    </source>
</evidence>
<evidence type="ECO:0000269" key="5">
    <source>
    </source>
</evidence>
<evidence type="ECO:0000269" key="6">
    <source>
    </source>
</evidence>
<evidence type="ECO:0000269" key="7">
    <source>
    </source>
</evidence>
<evidence type="ECO:0000269" key="8">
    <source>
    </source>
</evidence>
<evidence type="ECO:0000269" key="9">
    <source>
    </source>
</evidence>
<evidence type="ECO:0000269" key="10">
    <source>
    </source>
</evidence>
<evidence type="ECO:0000269" key="11">
    <source>
    </source>
</evidence>
<evidence type="ECO:0000269" key="12">
    <source>
    </source>
</evidence>
<evidence type="ECO:0000269" key="13">
    <source>
    </source>
</evidence>
<evidence type="ECO:0000269" key="14">
    <source>
    </source>
</evidence>
<evidence type="ECO:0000269" key="15">
    <source>
    </source>
</evidence>
<evidence type="ECO:0000269" key="16">
    <source>
    </source>
</evidence>
<evidence type="ECO:0000269" key="17">
    <source>
    </source>
</evidence>
<evidence type="ECO:0000269" key="18">
    <source>
    </source>
</evidence>
<evidence type="ECO:0000269" key="19">
    <source>
    </source>
</evidence>
<evidence type="ECO:0000269" key="20">
    <source>
    </source>
</evidence>
<evidence type="ECO:0000269" key="21">
    <source>
    </source>
</evidence>
<evidence type="ECO:0000269" key="22">
    <source>
    </source>
</evidence>
<evidence type="ECO:0000269" key="23">
    <source>
    </source>
</evidence>
<evidence type="ECO:0000269" key="24">
    <source>
    </source>
</evidence>
<evidence type="ECO:0000269" key="25">
    <source>
    </source>
</evidence>
<evidence type="ECO:0000269" key="26">
    <source>
    </source>
</evidence>
<evidence type="ECO:0000303" key="27">
    <source>
    </source>
</evidence>
<evidence type="ECO:0000303" key="28">
    <source>
    </source>
</evidence>
<evidence type="ECO:0000312" key="29">
    <source>
        <dbReference type="EMBL" id="AAA24613.1"/>
    </source>
</evidence>
<evidence type="ECO:0000312" key="30">
    <source>
        <dbReference type="EMBL" id="AAC74930.1"/>
    </source>
</evidence>
<evidence type="ECO:0000312" key="31">
    <source>
        <dbReference type="EMBL" id="BAA15671.1"/>
    </source>
</evidence>
<evidence type="ECO:0000312" key="32">
    <source>
        <dbReference type="EMBL" id="CAA30120.1"/>
    </source>
</evidence>
<proteinExistence type="evidence at protein level"/>
<sequence length="336" mass="37174">MIEADRLISAGTTLPEDVADRAIRPKLLEEYVGQPQVRSQMEIFIKAAKLRGDALDHLLIFGPPGLGKTTLANIVANEMGVNLRTTSGPVLEKAGDLAAMLTNLEPHDVLFIDEIHRLSPVVEEVLYPAMEDYQLDIMIGEGPAARSIKIDLPPFTLIGATTRAGSLTSPLRDRFGIVQRLEFYQVPDLQYIVSRSARFMGLEMSDDGALEVARRARGTPRIANRLLRRVRDFAEVKHDGTISADIAAQALDMLNVDAEGFDYMDRKLLLAVIDKFFGGPVGLDNLAAAIGEERETIEDVLEPYLIQQGFLQRTPRGRMATTRAWNHFGITPPEMP</sequence>
<organism>
    <name type="scientific">Escherichia coli (strain K12)</name>
    <dbReference type="NCBI Taxonomy" id="83333"/>
    <lineage>
        <taxon>Bacteria</taxon>
        <taxon>Pseudomonadati</taxon>
        <taxon>Pseudomonadota</taxon>
        <taxon>Gammaproteobacteria</taxon>
        <taxon>Enterobacterales</taxon>
        <taxon>Enterobacteriaceae</taxon>
        <taxon>Escherichia</taxon>
    </lineage>
</organism>
<comment type="function">
    <text evidence="1 3 4 5 6 7 8 9 13 17 20 21 23 26">The RuvABC complex is involved in recombinational repair of UV or chemically damaged DNA (PubMed:6374379). The complex also plays an important role in the rescue of blocked DNA replication forks via replication fork reversal (RFR); RFR and homologous recombination required for UV light survival can be separated (PubMed:16424908, PubMed:18942176, PubMed:9814711). This subunit has a weak ATPase activity that is inhibited by its ADP product; binds ADP better than ATP (PubMed:2529252). Promotes Holliday junction (HJ) branch migration in conjunction with RuvA. Binds to HJ cruciform DNA; in the presence of RuvA, ATP and Mg(2+) the junction is dissociated. Hydrolyzable (d)NTPs can replace ATP but other analogs cannot (PubMed:1608954, PubMed:1617728, PubMed:6374379, PubMed:8393934). The RuvB hexamer acts as a pump, pulling DNA into and through the RuvAB complex (PubMed:9078376). Can bypass UV-induced lesions (PubMed:1617728) and physically cross-linked DNA strands (PubMed:10662672), suggesting RuvB does not unwind large sections of DNA. RuvA gives specificity by binding to cruciform junctions, while the RuvB ATPase provides the motor force for branch migration; excess RuvB can promote branch migration in the absence of RuvA (PubMed:10662672, PubMed:1617728). In vitro the RuvA-RuvB complex has 5'-3' helicase activity that is ATP-dependent and works best on short dsDNA hybrids; 52 and 66-nucleotide (nt) pairs are easily displaced, hybrids greater than 140-nts are not (PubMed:8433990). RuvA stimulates the weak ATPase activity of RuvB in the presence of DNA; HJ DNA stimulates ATPase about 10-fold (PubMed:1435721, PubMed:1833759, PubMed:8393934).</text>
</comment>
<comment type="function">
    <text evidence="2 24">An in vitro resolvase system that forms and processes HJ has been reconstituted with DNA substrates, RuvA, RuvB and RuvC. RuvA-RuvB increases the rate of strand exchange (branch migration), dissociates the RecA filament and allows RuvC to cleave in both orientations at the cruciform junction (PubMed:10421637, PubMed:9160752). HJ-RuvA-RuvB-RuvC complexes resolve Holliday junctions and also undergo branch migration, providing evidence for a coupled branch migration/HJ resolution reaction (PubMed:10421637).</text>
</comment>
<comment type="catalytic activity">
    <reaction evidence="1 21">
        <text>ATP + H2O = ADP + phosphate + H(+)</text>
        <dbReference type="Rhea" id="RHEA:13065"/>
        <dbReference type="ChEBI" id="CHEBI:15377"/>
        <dbReference type="ChEBI" id="CHEBI:15378"/>
        <dbReference type="ChEBI" id="CHEBI:30616"/>
        <dbReference type="ChEBI" id="CHEBI:43474"/>
        <dbReference type="ChEBI" id="CHEBI:456216"/>
    </reaction>
    <physiologicalReaction direction="right-to-left" evidence="21">
        <dbReference type="Rhea" id="RHEA:13067"/>
    </physiologicalReaction>
</comment>
<comment type="cofactor">
    <cofactor evidence="6">
        <name>Mg(2+)</name>
        <dbReference type="ChEBI" id="CHEBI:18420"/>
    </cofactor>
    <text evidence="6">Branch migration by the RuvA-RuvB complex requires Mg(2+).</text>
</comment>
<comment type="activity regulation">
    <text evidence="13">The ATPase activity is inhibited by the ADP product.</text>
</comment>
<comment type="subunit">
    <text evidence="1 2 4 11 13 18 19 20 22 24 25">Monomer in solution (PubMed:2529252). Homodimer in solution (PubMed:1435721). Homohexamer (PubMed:7885479, PubMed:8052630, PubMed:9078376). Forms a stable RuvA-RuvB-Holliday junction (HJ) complex in the presence of non-hydrolyzable (d)NTPs; in the presence of hydrolyzable (d)NTPs branch migration occurs (PubMed:7885479, PubMed:8393934). Two oppositely facing RuvB hexamers sandwich possibly 2 RuvA tetramers at cruciform DNA structures (PubMed:7885479, PubMed:9047358). Homododecamer composed of two hexameric rings; when bound to DNA in the presence of ATP-gamma-S and Mg(2+) (PubMed:8052630). Forms a complex with RuvA without DNA. Forms a complex with RuvC without DNA (PubMed:9160752). In the presence of HJ DNA a (probably) DNA-RuvA(4)-RuvB(12)-RuvC(2) complex forms with 2 rings of RuvB that resolves upon addition of ATP. Upon resolution the protein complex dissociates from DNA (PubMed:10421637, PubMed:9637927). Interacts with Cas1 (ygbT) (PubMed:21219465).</text>
</comment>
<comment type="interaction">
    <interactant intactId="EBI-557878">
        <id>P0A812</id>
    </interactant>
    <interactant intactId="EBI-555119">
        <id>P0A809</id>
        <label>ruvA</label>
    </interactant>
    <organismsDiffer>false</organismsDiffer>
    <experiments>5</experiments>
</comment>
<comment type="subcellular location">
    <subcellularLocation>
        <location evidence="1 11">Cytoplasm</location>
    </subcellularLocation>
    <text>In 15% of cell localizes to discrete nucleoid foci (probable DNA damage sites) upon treatment with mitomycin C (MMC) for 2 hours.</text>
</comment>
<comment type="induction">
    <text evidence="10 15 16">Part of the ruvA-ruvB operon. Expression of the ruv region is induced by damage to DNA and is regulated by LexA as part of the SOS response. RuvA and RuvB are also involved in mutagenesis induced by UV and X irradiation and by some chemicals (PubMed:2842314, PubMed:3279394). Induced by hydroxyurea (PubMed:20005847).</text>
</comment>
<comment type="domain">
    <text evidence="1">Has 3 domains, the large (RuvB-L) and small ATPase (RuvB-S) domains and the C-terminal head (RuvB-H) domain. The head domain binds DNA, while the ATPase domains jointly bind ATP, ADP or are empty depending on the state of the subunit in the translocation cycle. During a single DNA translocation step the structure of each domain remains the same, but their relative positions change.</text>
</comment>
<comment type="disruption phenotype">
    <text evidence="12 14 17 26">Sensitive to radiation, filamentous growth after transient inhibition of DNA synthesis, little effect on conjugal recombination in wild-type strains (PubMed:6374379). Increased sensitivity to mitomycin and UV light (PubMed:2164626, PubMed:2693946). Suppresses lethality in recB-recC and dnaB temperature-sensitive mutants (PubMed:9814711).</text>
</comment>
<comment type="similarity">
    <text evidence="1">Belongs to the RuvB family.</text>
</comment>
<comment type="caution">
    <text evidence="3 6 21">While this subunit has weak helicase activity in vitro (PubMed:8433990), it does not act as one in vivo but rather as an ATP-dependent pump that drives DNA passage through the RuvA-RuvB complex to promote Holliday junction branch migration.</text>
</comment>
<feature type="chain" id="PRO_0000165528" description="Holliday junction branch migration complex subunit RuvB">
    <location>
        <begin position="1"/>
        <end position="336"/>
    </location>
</feature>
<feature type="region of interest" description="Large ATPase domain (RuvB-L)" evidence="1">
    <location>
        <begin position="4"/>
        <end position="184"/>
    </location>
</feature>
<feature type="region of interest" description="Small ATPAse domain (RuvB-S)" evidence="1">
    <location>
        <begin position="185"/>
        <end position="255"/>
    </location>
</feature>
<feature type="region of interest" description="Head domain (RuvB-H)" evidence="1">
    <location>
        <begin position="258"/>
        <end position="336"/>
    </location>
</feature>
<feature type="binding site" evidence="1">
    <location>
        <position position="23"/>
    </location>
    <ligand>
        <name>ATP</name>
        <dbReference type="ChEBI" id="CHEBI:30616"/>
    </ligand>
</feature>
<feature type="binding site" evidence="1">
    <location>
        <position position="24"/>
    </location>
    <ligand>
        <name>ATP</name>
        <dbReference type="ChEBI" id="CHEBI:30616"/>
    </ligand>
</feature>
<feature type="binding site" evidence="1">
    <location>
        <position position="65"/>
    </location>
    <ligand>
        <name>ATP</name>
        <dbReference type="ChEBI" id="CHEBI:30616"/>
    </ligand>
</feature>
<feature type="binding site" evidence="1">
    <location>
        <position position="68"/>
    </location>
    <ligand>
        <name>ATP</name>
        <dbReference type="ChEBI" id="CHEBI:30616"/>
    </ligand>
</feature>
<feature type="binding site" evidence="1">
    <location>
        <position position="69"/>
    </location>
    <ligand>
        <name>ATP</name>
        <dbReference type="ChEBI" id="CHEBI:30616"/>
    </ligand>
</feature>
<feature type="binding site" evidence="1">
    <location>
        <position position="69"/>
    </location>
    <ligand>
        <name>Mg(2+)</name>
        <dbReference type="ChEBI" id="CHEBI:18420"/>
    </ligand>
</feature>
<feature type="binding site" evidence="1">
    <location>
        <position position="70"/>
    </location>
    <ligand>
        <name>ATP</name>
        <dbReference type="ChEBI" id="CHEBI:30616"/>
    </ligand>
</feature>
<feature type="binding site" evidence="1">
    <location>
        <begin position="131"/>
        <end position="133"/>
    </location>
    <ligand>
        <name>ATP</name>
        <dbReference type="ChEBI" id="CHEBI:30616"/>
    </ligand>
</feature>
<feature type="binding site" evidence="1">
    <location>
        <position position="174"/>
    </location>
    <ligand>
        <name>ATP</name>
        <dbReference type="ChEBI" id="CHEBI:30616"/>
    </ligand>
</feature>
<feature type="binding site" evidence="1">
    <location>
        <position position="184"/>
    </location>
    <ligand>
        <name>ATP</name>
        <dbReference type="ChEBI" id="CHEBI:30616"/>
    </ligand>
</feature>
<feature type="binding site" evidence="1">
    <location>
        <position position="221"/>
    </location>
    <ligand>
        <name>ATP</name>
        <dbReference type="ChEBI" id="CHEBI:30616"/>
    </ligand>
</feature>
<feature type="binding site" evidence="1">
    <location>
        <position position="294"/>
    </location>
    <ligand>
        <name>DNA</name>
        <dbReference type="ChEBI" id="CHEBI:16991"/>
    </ligand>
</feature>
<feature type="binding site" evidence="1">
    <location>
        <position position="313"/>
    </location>
    <ligand>
        <name>DNA</name>
        <dbReference type="ChEBI" id="CHEBI:16991"/>
    </ligand>
</feature>
<feature type="binding site" evidence="1">
    <location>
        <position position="318"/>
    </location>
    <ligand>
        <name>DNA</name>
        <dbReference type="ChEBI" id="CHEBI:16991"/>
    </ligand>
</feature>
<feature type="mutagenesis site" description="Defective replication fork reversal (RFR), UV light resistant, resistant to mitomycin C (MMC)." evidence="9">
    <original>A</original>
    <variation>V</variation>
    <location>
        <position position="22"/>
    </location>
</feature>
<feature type="mutagenesis site" description="Defective RFR, UV light resistant, resistant to MMC." evidence="9">
    <original>Y</original>
    <variation>H</variation>
    <location>
        <position position="184"/>
    </location>
</feature>
<feature type="mutagenesis site" description="Defective RFR, UV light resistant, variably resistant to MMC." evidence="9">
    <original>P</original>
    <variation>S</variation>
    <location>
        <position position="220"/>
    </location>
</feature>
<feature type="mutagenesis site" description="Defective RFR, UV light resistant, sensitive to MMC." evidence="9">
    <original>A</original>
    <variation>T</variation>
    <location>
        <position position="250"/>
    </location>
</feature>
<accession>P0A812</accession>
<accession>P08577</accession>